<protein>
    <recommendedName>
        <fullName evidence="1">Octanoyltransferase</fullName>
        <ecNumber evidence="1">2.3.1.181</ecNumber>
    </recommendedName>
    <alternativeName>
        <fullName evidence="1">Lipoate-protein ligase B</fullName>
    </alternativeName>
    <alternativeName>
        <fullName evidence="1">Lipoyl/octanoyl transferase</fullName>
    </alternativeName>
    <alternativeName>
        <fullName evidence="1">Octanoyl-[acyl-carrier-protein]-protein N-octanoyltransferase</fullName>
    </alternativeName>
</protein>
<organism>
    <name type="scientific">Flavobacterium johnsoniae (strain ATCC 17061 / DSM 2064 / JCM 8514 / BCRC 14874 / CCUG 350202 / NBRC 14942 / NCIMB 11054 / UW101)</name>
    <name type="common">Cytophaga johnsonae</name>
    <dbReference type="NCBI Taxonomy" id="376686"/>
    <lineage>
        <taxon>Bacteria</taxon>
        <taxon>Pseudomonadati</taxon>
        <taxon>Bacteroidota</taxon>
        <taxon>Flavobacteriia</taxon>
        <taxon>Flavobacteriales</taxon>
        <taxon>Flavobacteriaceae</taxon>
        <taxon>Flavobacterium</taxon>
    </lineage>
</organism>
<feature type="chain" id="PRO_1000074002" description="Octanoyltransferase">
    <location>
        <begin position="1"/>
        <end position="232"/>
    </location>
</feature>
<feature type="domain" description="BPL/LPL catalytic" evidence="2">
    <location>
        <begin position="43"/>
        <end position="231"/>
    </location>
</feature>
<feature type="active site" description="Acyl-thioester intermediate" evidence="1">
    <location>
        <position position="191"/>
    </location>
</feature>
<feature type="binding site" evidence="1">
    <location>
        <begin position="88"/>
        <end position="95"/>
    </location>
    <ligand>
        <name>substrate</name>
    </ligand>
</feature>
<feature type="binding site" evidence="1">
    <location>
        <begin position="160"/>
        <end position="162"/>
    </location>
    <ligand>
        <name>substrate</name>
    </ligand>
</feature>
<feature type="binding site" evidence="1">
    <location>
        <begin position="173"/>
        <end position="175"/>
    </location>
    <ligand>
        <name>substrate</name>
    </ligand>
</feature>
<feature type="site" description="Lowers pKa of active site Cys" evidence="1">
    <location>
        <position position="157"/>
    </location>
</feature>
<comment type="function">
    <text evidence="1">Catalyzes the transfer of endogenously produced octanoic acid from octanoyl-acyl-carrier-protein onto the lipoyl domains of lipoate-dependent enzymes. Lipoyl-ACP can also act as a substrate although octanoyl-ACP is likely to be the physiological substrate.</text>
</comment>
<comment type="catalytic activity">
    <reaction evidence="1">
        <text>octanoyl-[ACP] + L-lysyl-[protein] = N(6)-octanoyl-L-lysyl-[protein] + holo-[ACP] + H(+)</text>
        <dbReference type="Rhea" id="RHEA:17665"/>
        <dbReference type="Rhea" id="RHEA-COMP:9636"/>
        <dbReference type="Rhea" id="RHEA-COMP:9685"/>
        <dbReference type="Rhea" id="RHEA-COMP:9752"/>
        <dbReference type="Rhea" id="RHEA-COMP:9928"/>
        <dbReference type="ChEBI" id="CHEBI:15378"/>
        <dbReference type="ChEBI" id="CHEBI:29969"/>
        <dbReference type="ChEBI" id="CHEBI:64479"/>
        <dbReference type="ChEBI" id="CHEBI:78463"/>
        <dbReference type="ChEBI" id="CHEBI:78809"/>
        <dbReference type="EC" id="2.3.1.181"/>
    </reaction>
</comment>
<comment type="pathway">
    <text evidence="1">Protein modification; protein lipoylation via endogenous pathway; protein N(6)-(lipoyl)lysine from octanoyl-[acyl-carrier-protein]: step 1/2.</text>
</comment>
<comment type="subcellular location">
    <subcellularLocation>
        <location evidence="1">Cytoplasm</location>
    </subcellularLocation>
</comment>
<comment type="miscellaneous">
    <text evidence="1">In the reaction, the free carboxyl group of octanoic acid is attached via an amide linkage to the epsilon-amino group of a specific lysine residue of lipoyl domains of lipoate-dependent enzymes.</text>
</comment>
<comment type="similarity">
    <text evidence="1">Belongs to the LipB family.</text>
</comment>
<evidence type="ECO:0000255" key="1">
    <source>
        <dbReference type="HAMAP-Rule" id="MF_00013"/>
    </source>
</evidence>
<evidence type="ECO:0000255" key="2">
    <source>
        <dbReference type="PROSITE-ProRule" id="PRU01067"/>
    </source>
</evidence>
<keyword id="KW-0012">Acyltransferase</keyword>
<keyword id="KW-0963">Cytoplasm</keyword>
<keyword id="KW-0808">Transferase</keyword>
<proteinExistence type="inferred from homology"/>
<sequence length="232" mass="26363">MNKKIQLQDLGNRDYKSTWEYQEELFQDIVDLKIKNRREELDLPTSNYLLFVEHPHVYTLGKSGDLENLLLNEKQLEAKGAAFYKINRGGDITYHGPGQIVGYPILDLENFFTDIHKYLRLLEESMILTLAEYGLESGRSEGETGVWLGVGTPFARKICAMGVRASRWVTMHGFALNVNVDLGYFDNIIPCGIRGKGVTSLNVELGVEKVDEDEVKSKIIKHLTHLFEAEIV</sequence>
<dbReference type="EC" id="2.3.1.181" evidence="1"/>
<dbReference type="EMBL" id="CP000685">
    <property type="protein sequence ID" value="ABQ04954.1"/>
    <property type="molecule type" value="Genomic_DNA"/>
</dbReference>
<dbReference type="RefSeq" id="WP_012023998.1">
    <property type="nucleotide sequence ID" value="NZ_MUGZ01000002.1"/>
</dbReference>
<dbReference type="SMR" id="A5FIL6"/>
<dbReference type="STRING" id="376686.Fjoh_1922"/>
<dbReference type="KEGG" id="fjo:Fjoh_1922"/>
<dbReference type="eggNOG" id="COG0321">
    <property type="taxonomic scope" value="Bacteria"/>
</dbReference>
<dbReference type="HOGENOM" id="CLU_035168_1_3_10"/>
<dbReference type="OrthoDB" id="9787061at2"/>
<dbReference type="UniPathway" id="UPA00538">
    <property type="reaction ID" value="UER00592"/>
</dbReference>
<dbReference type="Proteomes" id="UP000006694">
    <property type="component" value="Chromosome"/>
</dbReference>
<dbReference type="GO" id="GO:0005737">
    <property type="term" value="C:cytoplasm"/>
    <property type="evidence" value="ECO:0007669"/>
    <property type="project" value="UniProtKB-SubCell"/>
</dbReference>
<dbReference type="GO" id="GO:0033819">
    <property type="term" value="F:lipoyl(octanoyl) transferase activity"/>
    <property type="evidence" value="ECO:0007669"/>
    <property type="project" value="UniProtKB-EC"/>
</dbReference>
<dbReference type="GO" id="GO:0036211">
    <property type="term" value="P:protein modification process"/>
    <property type="evidence" value="ECO:0007669"/>
    <property type="project" value="InterPro"/>
</dbReference>
<dbReference type="CDD" id="cd16444">
    <property type="entry name" value="LipB"/>
    <property type="match status" value="1"/>
</dbReference>
<dbReference type="FunFam" id="3.30.930.10:FF:000035">
    <property type="entry name" value="Putative lipoyltransferase 2, mitochondrial"/>
    <property type="match status" value="1"/>
</dbReference>
<dbReference type="Gene3D" id="3.30.930.10">
    <property type="entry name" value="Bira Bifunctional Protein, Domain 2"/>
    <property type="match status" value="1"/>
</dbReference>
<dbReference type="HAMAP" id="MF_00013">
    <property type="entry name" value="LipB"/>
    <property type="match status" value="1"/>
</dbReference>
<dbReference type="InterPro" id="IPR045864">
    <property type="entry name" value="aa-tRNA-synth_II/BPL/LPL"/>
</dbReference>
<dbReference type="InterPro" id="IPR004143">
    <property type="entry name" value="BPL_LPL_catalytic"/>
</dbReference>
<dbReference type="InterPro" id="IPR000544">
    <property type="entry name" value="Octanoyltransferase"/>
</dbReference>
<dbReference type="InterPro" id="IPR020605">
    <property type="entry name" value="Octanoyltransferase_CS"/>
</dbReference>
<dbReference type="NCBIfam" id="TIGR00214">
    <property type="entry name" value="lipB"/>
    <property type="match status" value="1"/>
</dbReference>
<dbReference type="NCBIfam" id="NF010925">
    <property type="entry name" value="PRK14345.1"/>
    <property type="match status" value="1"/>
</dbReference>
<dbReference type="PANTHER" id="PTHR10993">
    <property type="entry name" value="OCTANOYLTRANSFERASE"/>
    <property type="match status" value="1"/>
</dbReference>
<dbReference type="PANTHER" id="PTHR10993:SF12">
    <property type="entry name" value="OCTANOYLTRANSFERASE"/>
    <property type="match status" value="1"/>
</dbReference>
<dbReference type="Pfam" id="PF21948">
    <property type="entry name" value="LplA-B_cat"/>
    <property type="match status" value="1"/>
</dbReference>
<dbReference type="PIRSF" id="PIRSF016262">
    <property type="entry name" value="LPLase"/>
    <property type="match status" value="1"/>
</dbReference>
<dbReference type="SUPFAM" id="SSF55681">
    <property type="entry name" value="Class II aaRS and biotin synthetases"/>
    <property type="match status" value="1"/>
</dbReference>
<dbReference type="PROSITE" id="PS51733">
    <property type="entry name" value="BPL_LPL_CATALYTIC"/>
    <property type="match status" value="1"/>
</dbReference>
<dbReference type="PROSITE" id="PS01313">
    <property type="entry name" value="LIPB"/>
    <property type="match status" value="1"/>
</dbReference>
<accession>A5FIL6</accession>
<name>LIPB_FLAJ1</name>
<gene>
    <name evidence="1" type="primary">lipB</name>
    <name type="ordered locus">Fjoh_1922</name>
</gene>
<reference key="1">
    <citation type="journal article" date="2009" name="Appl. Environ. Microbiol.">
        <title>Novel features of the polysaccharide-digesting gliding bacterium Flavobacterium johnsoniae as revealed by genome sequence analysis.</title>
        <authorList>
            <person name="McBride M.J."/>
            <person name="Xie G."/>
            <person name="Martens E.C."/>
            <person name="Lapidus A."/>
            <person name="Henrissat B."/>
            <person name="Rhodes R.G."/>
            <person name="Goltsman E."/>
            <person name="Wang W."/>
            <person name="Xu J."/>
            <person name="Hunnicutt D.W."/>
            <person name="Staroscik A.M."/>
            <person name="Hoover T.R."/>
            <person name="Cheng Y.Q."/>
            <person name="Stein J.L."/>
        </authorList>
    </citation>
    <scope>NUCLEOTIDE SEQUENCE [LARGE SCALE GENOMIC DNA]</scope>
    <source>
        <strain>ATCC 17061 / DSM 2064 / JCM 8514 / BCRC 14874 / CCUG 350202 / NBRC 14942 / NCIMB 11054 / UW101</strain>
    </source>
</reference>